<gene>
    <name type="primary">C1orf216</name>
</gene>
<accession>Q8TAB5</accession>
<accession>D3DPS1</accession>
<accession>Q8N8N6</accession>
<feature type="chain" id="PRO_0000309178" description="UPF0500 protein C1orf216">
    <location>
        <begin position="1"/>
        <end position="229"/>
    </location>
</feature>
<feature type="region of interest" description="Disordered" evidence="1">
    <location>
        <begin position="1"/>
        <end position="144"/>
    </location>
</feature>
<feature type="compositionally biased region" description="Polar residues" evidence="1">
    <location>
        <begin position="62"/>
        <end position="71"/>
    </location>
</feature>
<feature type="compositionally biased region" description="Low complexity" evidence="1">
    <location>
        <begin position="84"/>
        <end position="93"/>
    </location>
</feature>
<feature type="compositionally biased region" description="Low complexity" evidence="1">
    <location>
        <begin position="115"/>
        <end position="126"/>
    </location>
</feature>
<feature type="sequence conflict" description="In Ref. 1; BAC04799." evidence="2" ref="1">
    <original>P</original>
    <variation>T</variation>
    <location>
        <position position="19"/>
    </location>
</feature>
<sequence>MFAIQPGLAEGGQFLGDPPPGLCQPELQPDSNSNFMASAKDANENWHGMPGRVEPILRRSSSESPSDNQAFQAPGSPEEGVRSPPEGAEIPGAEPEKMGGAGTVCSPLEDNGYASSSLSIDSRSSSPEPACGTPRGPGPPDPLLPSVAQAVQHLQVQERYKEQEKEKHHVHLVMYRRLALLQWIRGLQHQLIDQQARLQESFDTILDNRKELIRCLQQRAAPSRPQDQA</sequence>
<evidence type="ECO:0000256" key="1">
    <source>
        <dbReference type="SAM" id="MobiDB-lite"/>
    </source>
</evidence>
<evidence type="ECO:0000305" key="2"/>
<protein>
    <recommendedName>
        <fullName>UPF0500 protein C1orf216</fullName>
    </recommendedName>
</protein>
<name>CA216_HUMAN</name>
<reference key="1">
    <citation type="journal article" date="2004" name="Nat. Genet.">
        <title>Complete sequencing and characterization of 21,243 full-length human cDNAs.</title>
        <authorList>
            <person name="Ota T."/>
            <person name="Suzuki Y."/>
            <person name="Nishikawa T."/>
            <person name="Otsuki T."/>
            <person name="Sugiyama T."/>
            <person name="Irie R."/>
            <person name="Wakamatsu A."/>
            <person name="Hayashi K."/>
            <person name="Sato H."/>
            <person name="Nagai K."/>
            <person name="Kimura K."/>
            <person name="Makita H."/>
            <person name="Sekine M."/>
            <person name="Obayashi M."/>
            <person name="Nishi T."/>
            <person name="Shibahara T."/>
            <person name="Tanaka T."/>
            <person name="Ishii S."/>
            <person name="Yamamoto J."/>
            <person name="Saito K."/>
            <person name="Kawai Y."/>
            <person name="Isono Y."/>
            <person name="Nakamura Y."/>
            <person name="Nagahari K."/>
            <person name="Murakami K."/>
            <person name="Yasuda T."/>
            <person name="Iwayanagi T."/>
            <person name="Wagatsuma M."/>
            <person name="Shiratori A."/>
            <person name="Sudo H."/>
            <person name="Hosoiri T."/>
            <person name="Kaku Y."/>
            <person name="Kodaira H."/>
            <person name="Kondo H."/>
            <person name="Sugawara M."/>
            <person name="Takahashi M."/>
            <person name="Kanda K."/>
            <person name="Yokoi T."/>
            <person name="Furuya T."/>
            <person name="Kikkawa E."/>
            <person name="Omura Y."/>
            <person name="Abe K."/>
            <person name="Kamihara K."/>
            <person name="Katsuta N."/>
            <person name="Sato K."/>
            <person name="Tanikawa M."/>
            <person name="Yamazaki M."/>
            <person name="Ninomiya K."/>
            <person name="Ishibashi T."/>
            <person name="Yamashita H."/>
            <person name="Murakawa K."/>
            <person name="Fujimori K."/>
            <person name="Tanai H."/>
            <person name="Kimata M."/>
            <person name="Watanabe M."/>
            <person name="Hiraoka S."/>
            <person name="Chiba Y."/>
            <person name="Ishida S."/>
            <person name="Ono Y."/>
            <person name="Takiguchi S."/>
            <person name="Watanabe S."/>
            <person name="Yosida M."/>
            <person name="Hotuta T."/>
            <person name="Kusano J."/>
            <person name="Kanehori K."/>
            <person name="Takahashi-Fujii A."/>
            <person name="Hara H."/>
            <person name="Tanase T.-O."/>
            <person name="Nomura Y."/>
            <person name="Togiya S."/>
            <person name="Komai F."/>
            <person name="Hara R."/>
            <person name="Takeuchi K."/>
            <person name="Arita M."/>
            <person name="Imose N."/>
            <person name="Musashino K."/>
            <person name="Yuuki H."/>
            <person name="Oshima A."/>
            <person name="Sasaki N."/>
            <person name="Aotsuka S."/>
            <person name="Yoshikawa Y."/>
            <person name="Matsunawa H."/>
            <person name="Ichihara T."/>
            <person name="Shiohata N."/>
            <person name="Sano S."/>
            <person name="Moriya S."/>
            <person name="Momiyama H."/>
            <person name="Satoh N."/>
            <person name="Takami S."/>
            <person name="Terashima Y."/>
            <person name="Suzuki O."/>
            <person name="Nakagawa S."/>
            <person name="Senoh A."/>
            <person name="Mizoguchi H."/>
            <person name="Goto Y."/>
            <person name="Shimizu F."/>
            <person name="Wakebe H."/>
            <person name="Hishigaki H."/>
            <person name="Watanabe T."/>
            <person name="Sugiyama A."/>
            <person name="Takemoto M."/>
            <person name="Kawakami B."/>
            <person name="Yamazaki M."/>
            <person name="Watanabe K."/>
            <person name="Kumagai A."/>
            <person name="Itakura S."/>
            <person name="Fukuzumi Y."/>
            <person name="Fujimori Y."/>
            <person name="Komiyama M."/>
            <person name="Tashiro H."/>
            <person name="Tanigami A."/>
            <person name="Fujiwara T."/>
            <person name="Ono T."/>
            <person name="Yamada K."/>
            <person name="Fujii Y."/>
            <person name="Ozaki K."/>
            <person name="Hirao M."/>
            <person name="Ohmori Y."/>
            <person name="Kawabata A."/>
            <person name="Hikiji T."/>
            <person name="Kobatake N."/>
            <person name="Inagaki H."/>
            <person name="Ikema Y."/>
            <person name="Okamoto S."/>
            <person name="Okitani R."/>
            <person name="Kawakami T."/>
            <person name="Noguchi S."/>
            <person name="Itoh T."/>
            <person name="Shigeta K."/>
            <person name="Senba T."/>
            <person name="Matsumura K."/>
            <person name="Nakajima Y."/>
            <person name="Mizuno T."/>
            <person name="Morinaga M."/>
            <person name="Sasaki M."/>
            <person name="Togashi T."/>
            <person name="Oyama M."/>
            <person name="Hata H."/>
            <person name="Watanabe M."/>
            <person name="Komatsu T."/>
            <person name="Mizushima-Sugano J."/>
            <person name="Satoh T."/>
            <person name="Shirai Y."/>
            <person name="Takahashi Y."/>
            <person name="Nakagawa K."/>
            <person name="Okumura K."/>
            <person name="Nagase T."/>
            <person name="Nomura N."/>
            <person name="Kikuchi H."/>
            <person name="Masuho Y."/>
            <person name="Yamashita R."/>
            <person name="Nakai K."/>
            <person name="Yada T."/>
            <person name="Nakamura Y."/>
            <person name="Ohara O."/>
            <person name="Isogai T."/>
            <person name="Sugano S."/>
        </authorList>
    </citation>
    <scope>NUCLEOTIDE SEQUENCE [LARGE SCALE MRNA]</scope>
    <source>
        <tissue>Brain</tissue>
        <tissue>Teratocarcinoma</tissue>
    </source>
</reference>
<reference key="2">
    <citation type="submission" date="2005-09" db="EMBL/GenBank/DDBJ databases">
        <authorList>
            <person name="Mural R.J."/>
            <person name="Istrail S."/>
            <person name="Sutton G.G."/>
            <person name="Florea L."/>
            <person name="Halpern A.L."/>
            <person name="Mobarry C.M."/>
            <person name="Lippert R."/>
            <person name="Walenz B."/>
            <person name="Shatkay H."/>
            <person name="Dew I."/>
            <person name="Miller J.R."/>
            <person name="Flanigan M.J."/>
            <person name="Edwards N.J."/>
            <person name="Bolanos R."/>
            <person name="Fasulo D."/>
            <person name="Halldorsson B.V."/>
            <person name="Hannenhalli S."/>
            <person name="Turner R."/>
            <person name="Yooseph S."/>
            <person name="Lu F."/>
            <person name="Nusskern D.R."/>
            <person name="Shue B.C."/>
            <person name="Zheng X.H."/>
            <person name="Zhong F."/>
            <person name="Delcher A.L."/>
            <person name="Huson D.H."/>
            <person name="Kravitz S.A."/>
            <person name="Mouchard L."/>
            <person name="Reinert K."/>
            <person name="Remington K.A."/>
            <person name="Clark A.G."/>
            <person name="Waterman M.S."/>
            <person name="Eichler E.E."/>
            <person name="Adams M.D."/>
            <person name="Hunkapiller M.W."/>
            <person name="Myers E.W."/>
            <person name="Venter J.C."/>
        </authorList>
    </citation>
    <scope>NUCLEOTIDE SEQUENCE [LARGE SCALE GENOMIC DNA]</scope>
</reference>
<reference key="3">
    <citation type="journal article" date="2004" name="Genome Res.">
        <title>The status, quality, and expansion of the NIH full-length cDNA project: the Mammalian Gene Collection (MGC).</title>
        <authorList>
            <consortium name="The MGC Project Team"/>
        </authorList>
    </citation>
    <scope>NUCLEOTIDE SEQUENCE [LARGE SCALE MRNA]</scope>
    <source>
        <tissue>Brain</tissue>
    </source>
</reference>
<reference key="4">
    <citation type="journal article" date="2013" name="J. Proteome Res.">
        <title>Toward a comprehensive characterization of a human cancer cell phosphoproteome.</title>
        <authorList>
            <person name="Zhou H."/>
            <person name="Di Palma S."/>
            <person name="Preisinger C."/>
            <person name="Peng M."/>
            <person name="Polat A.N."/>
            <person name="Heck A.J."/>
            <person name="Mohammed S."/>
        </authorList>
    </citation>
    <scope>IDENTIFICATION BY MASS SPECTROMETRY [LARGE SCALE ANALYSIS]</scope>
    <source>
        <tissue>Erythroleukemia</tissue>
    </source>
</reference>
<dbReference type="EMBL" id="AK096303">
    <property type="protein sequence ID" value="BAC04755.1"/>
    <property type="molecule type" value="mRNA"/>
</dbReference>
<dbReference type="EMBL" id="AK096466">
    <property type="protein sequence ID" value="BAC04799.1"/>
    <property type="status" value="ALT_INIT"/>
    <property type="molecule type" value="mRNA"/>
</dbReference>
<dbReference type="EMBL" id="CH471059">
    <property type="protein sequence ID" value="EAX07403.1"/>
    <property type="molecule type" value="Genomic_DNA"/>
</dbReference>
<dbReference type="EMBL" id="CH471059">
    <property type="protein sequence ID" value="EAX07404.1"/>
    <property type="molecule type" value="Genomic_DNA"/>
</dbReference>
<dbReference type="EMBL" id="BC026909">
    <property type="protein sequence ID" value="AAH26909.1"/>
    <property type="molecule type" value="mRNA"/>
</dbReference>
<dbReference type="CCDS" id="CCDS395.1"/>
<dbReference type="RefSeq" id="NP_001335620.1">
    <property type="nucleotide sequence ID" value="NM_001348691.2"/>
</dbReference>
<dbReference type="RefSeq" id="NP_689587.1">
    <property type="nucleotide sequence ID" value="NM_152374.2"/>
</dbReference>
<dbReference type="SMR" id="Q8TAB5"/>
<dbReference type="BioGRID" id="126079">
    <property type="interactions" value="72"/>
</dbReference>
<dbReference type="FunCoup" id="Q8TAB5">
    <property type="interactions" value="43"/>
</dbReference>
<dbReference type="IntAct" id="Q8TAB5">
    <property type="interactions" value="89"/>
</dbReference>
<dbReference type="MINT" id="Q8TAB5"/>
<dbReference type="STRING" id="9606.ENSP00000425166"/>
<dbReference type="iPTMnet" id="Q8TAB5"/>
<dbReference type="PhosphoSitePlus" id="Q8TAB5"/>
<dbReference type="BioMuta" id="C1orf216"/>
<dbReference type="DMDM" id="74730336"/>
<dbReference type="jPOST" id="Q8TAB5"/>
<dbReference type="MassIVE" id="Q8TAB5"/>
<dbReference type="PaxDb" id="9606-ENSP00000425166"/>
<dbReference type="PeptideAtlas" id="Q8TAB5"/>
<dbReference type="ProteomicsDB" id="73852"/>
<dbReference type="Antibodypedia" id="31583">
    <property type="antibodies" value="79 antibodies from 16 providers"/>
</dbReference>
<dbReference type="DNASU" id="127703"/>
<dbReference type="Ensembl" id="ENST00000270815.5">
    <property type="protein sequence ID" value="ENSP00000425166.1"/>
    <property type="gene ID" value="ENSG00000142686.8"/>
</dbReference>
<dbReference type="GeneID" id="127703"/>
<dbReference type="KEGG" id="hsa:127703"/>
<dbReference type="MANE-Select" id="ENST00000270815.5">
    <property type="protein sequence ID" value="ENSP00000425166.1"/>
    <property type="RefSeq nucleotide sequence ID" value="NM_152374.2"/>
    <property type="RefSeq protein sequence ID" value="NP_689587.1"/>
</dbReference>
<dbReference type="UCSC" id="uc001bzh.2">
    <property type="organism name" value="human"/>
</dbReference>
<dbReference type="AGR" id="HGNC:26800"/>
<dbReference type="CTD" id="127703"/>
<dbReference type="GeneCards" id="C1orf216"/>
<dbReference type="HGNC" id="HGNC:26800">
    <property type="gene designation" value="C1orf216"/>
</dbReference>
<dbReference type="HPA" id="ENSG00000142686">
    <property type="expression patterns" value="Tissue enhanced (brain)"/>
</dbReference>
<dbReference type="neXtProt" id="NX_Q8TAB5"/>
<dbReference type="OpenTargets" id="ENSG00000142686"/>
<dbReference type="PharmGKB" id="PA162378892"/>
<dbReference type="VEuPathDB" id="HostDB:ENSG00000142686"/>
<dbReference type="eggNOG" id="ENOG502S1PX">
    <property type="taxonomic scope" value="Eukaryota"/>
</dbReference>
<dbReference type="GeneTree" id="ENSGT00390000001867"/>
<dbReference type="HOGENOM" id="CLU_1156086_0_0_1"/>
<dbReference type="InParanoid" id="Q8TAB5"/>
<dbReference type="OMA" id="GMPGKVE"/>
<dbReference type="OrthoDB" id="9900901at2759"/>
<dbReference type="PAN-GO" id="Q8TAB5">
    <property type="GO annotations" value="0 GO annotations based on evolutionary models"/>
</dbReference>
<dbReference type="PhylomeDB" id="Q8TAB5"/>
<dbReference type="TreeFam" id="TF335932"/>
<dbReference type="PathwayCommons" id="Q8TAB5"/>
<dbReference type="SignaLink" id="Q8TAB5"/>
<dbReference type="BioGRID-ORCS" id="127703">
    <property type="hits" value="45 hits in 1134 CRISPR screens"/>
</dbReference>
<dbReference type="ChiTaRS" id="C1orf216">
    <property type="organism name" value="human"/>
</dbReference>
<dbReference type="GenomeRNAi" id="127703"/>
<dbReference type="Pharos" id="Q8TAB5">
    <property type="development level" value="Tdark"/>
</dbReference>
<dbReference type="PRO" id="PR:Q8TAB5"/>
<dbReference type="Proteomes" id="UP000005640">
    <property type="component" value="Chromosome 1"/>
</dbReference>
<dbReference type="RNAct" id="Q8TAB5">
    <property type="molecule type" value="protein"/>
</dbReference>
<dbReference type="Bgee" id="ENSG00000142686">
    <property type="expression patterns" value="Expressed in middle temporal gyrus and 167 other cell types or tissues"/>
</dbReference>
<dbReference type="InterPro" id="IPR027812">
    <property type="entry name" value="DUF4653"/>
</dbReference>
<dbReference type="PANTHER" id="PTHR35673">
    <property type="entry name" value="UPF0500 PROTEIN C1ORF216"/>
    <property type="match status" value="1"/>
</dbReference>
<dbReference type="PANTHER" id="PTHR35673:SF1">
    <property type="entry name" value="UPF0500 PROTEIN C1ORF216"/>
    <property type="match status" value="1"/>
</dbReference>
<dbReference type="Pfam" id="PF15546">
    <property type="entry name" value="DUF4653"/>
    <property type="match status" value="1"/>
</dbReference>
<keyword id="KW-1267">Proteomics identification</keyword>
<keyword id="KW-1185">Reference proteome</keyword>
<proteinExistence type="evidence at protein level"/>
<comment type="interaction">
    <interactant intactId="EBI-747505">
        <id>Q8TAB5</id>
    </interactant>
    <interactant intactId="EBI-11096309">
        <id>Q9NYB9-2</id>
        <label>ABI2</label>
    </interactant>
    <organismsDiffer>false</organismsDiffer>
    <experiments>3</experiments>
</comment>
<comment type="interaction">
    <interactant intactId="EBI-747505">
        <id>Q8TAB5</id>
    </interactant>
    <interactant intactId="EBI-745226">
        <id>Q13155</id>
        <label>AIMP2</label>
    </interactant>
    <organismsDiffer>false</organismsDiffer>
    <experiments>3</experiments>
</comment>
<comment type="interaction">
    <interactant intactId="EBI-747505">
        <id>Q8TAB5</id>
    </interactant>
    <interactant intactId="EBI-17286414">
        <id>A2BDD9</id>
        <label>AMOT</label>
    </interactant>
    <organismsDiffer>false</organismsDiffer>
    <experiments>3</experiments>
</comment>
<comment type="interaction">
    <interactant intactId="EBI-747505">
        <id>Q8TAB5</id>
    </interactant>
    <interactant intactId="EBI-3891843">
        <id>Q4VCS5-2</id>
        <label>AMOT</label>
    </interactant>
    <organismsDiffer>false</organismsDiffer>
    <experiments>3</experiments>
</comment>
<comment type="interaction">
    <interactant intactId="EBI-747505">
        <id>Q8TAB5</id>
    </interactant>
    <interactant intactId="EBI-10193358">
        <id>Q96GS4</id>
        <label>BORCS6</label>
    </interactant>
    <organismsDiffer>false</organismsDiffer>
    <experiments>3</experiments>
</comment>
<comment type="interaction">
    <interactant intactId="EBI-747505">
        <id>Q8TAB5</id>
    </interactant>
    <interactant intactId="EBI-1049597">
        <id>P27797</id>
        <label>CALR</label>
    </interactant>
    <organismsDiffer>false</organismsDiffer>
    <experiments>3</experiments>
</comment>
<comment type="interaction">
    <interactant intactId="EBI-747505">
        <id>Q8TAB5</id>
    </interactant>
    <interactant intactId="EBI-10171416">
        <id>Q96JN2-2</id>
        <label>CCDC136</label>
    </interactant>
    <organismsDiffer>false</organismsDiffer>
    <experiments>3</experiments>
</comment>
<comment type="interaction">
    <interactant intactId="EBI-747505">
        <id>Q8TAB5</id>
    </interactant>
    <interactant intactId="EBI-750686">
        <id>Q8NCU1</id>
        <label>CCDC197</label>
    </interactant>
    <organismsDiffer>false</organismsDiffer>
    <experiments>8</experiments>
</comment>
<comment type="interaction">
    <interactant intactId="EBI-747505">
        <id>Q8TAB5</id>
    </interactant>
    <interactant intactId="EBI-1181367">
        <id>Q01850</id>
        <label>CDR2</label>
    </interactant>
    <organismsDiffer>false</organismsDiffer>
    <experiments>6</experiments>
</comment>
<comment type="interaction">
    <interactant intactId="EBI-747505">
        <id>Q8TAB5</id>
    </interactant>
    <interactant intactId="EBI-11063830">
        <id>Q86X02</id>
        <label>CDR2L</label>
    </interactant>
    <organismsDiffer>false</organismsDiffer>
    <experiments>3</experiments>
</comment>
<comment type="interaction">
    <interactant intactId="EBI-747505">
        <id>Q8TAB5</id>
    </interactant>
    <interactant intactId="EBI-1003700">
        <id>Q9H3R5</id>
        <label>CENPH</label>
    </interactant>
    <organismsDiffer>false</organismsDiffer>
    <experiments>3</experiments>
</comment>
<comment type="interaction">
    <interactant intactId="EBI-747505">
        <id>Q8TAB5</id>
    </interactant>
    <interactant intactId="EBI-747776">
        <id>Q53EZ4</id>
        <label>CEP55</label>
    </interactant>
    <organismsDiffer>false</organismsDiffer>
    <experiments>3</experiments>
</comment>
<comment type="interaction">
    <interactant intactId="EBI-747505">
        <id>Q8TAB5</id>
    </interactant>
    <interactant intactId="EBI-1045797">
        <id>Q8N5K1</id>
        <label>CISD2</label>
    </interactant>
    <organismsDiffer>false</organismsDiffer>
    <experiments>3</experiments>
</comment>
<comment type="interaction">
    <interactant intactId="EBI-747505">
        <id>Q8TAB5</id>
    </interactant>
    <interactant intactId="EBI-16780661">
        <id>Q9NRP2</id>
        <label>CMC2</label>
    </interactant>
    <organismsDiffer>false</organismsDiffer>
    <experiments>3</experiments>
</comment>
<comment type="interaction">
    <interactant intactId="EBI-747505">
        <id>Q8TAB5</id>
    </interactant>
    <interactant intactId="EBI-1055572">
        <id>P17661</id>
        <label>DES</label>
    </interactant>
    <organismsDiffer>false</organismsDiffer>
    <experiments>3</experiments>
</comment>
<comment type="interaction">
    <interactant intactId="EBI-747505">
        <id>Q8TAB5</id>
    </interactant>
    <interactant intactId="EBI-351007">
        <id>P36957</id>
        <label>DLST</label>
    </interactant>
    <organismsDiffer>false</organismsDiffer>
    <experiments>3</experiments>
</comment>
<comment type="interaction">
    <interactant intactId="EBI-747505">
        <id>Q8TAB5</id>
    </interactant>
    <interactant intactId="EBI-399105">
        <id>Q9NPF5</id>
        <label>DMAP1</label>
    </interactant>
    <organismsDiffer>false</organismsDiffer>
    <experiments>5</experiments>
</comment>
<comment type="interaction">
    <interactant intactId="EBI-747505">
        <id>Q8TAB5</id>
    </interactant>
    <interactant intactId="EBI-711990">
        <id>O00303</id>
        <label>EIF3F</label>
    </interactant>
    <organismsDiffer>false</organismsDiffer>
    <experiments>3</experiments>
</comment>
<comment type="interaction">
    <interactant intactId="EBI-747505">
        <id>Q8TAB5</id>
    </interactant>
    <interactant intactId="EBI-949824">
        <id>O00471</id>
        <label>EXOC5</label>
    </interactant>
    <organismsDiffer>false</organismsDiffer>
    <experiments>3</experiments>
</comment>
<comment type="interaction">
    <interactant intactId="EBI-747505">
        <id>Q8TAB5</id>
    </interactant>
    <interactant intactId="EBI-5661036">
        <id>A1L4K1</id>
        <label>FSD2</label>
    </interactant>
    <organismsDiffer>false</organismsDiffer>
    <experiments>3</experiments>
</comment>
<comment type="interaction">
    <interactant intactId="EBI-747505">
        <id>Q8TAB5</id>
    </interactant>
    <interactant intactId="EBI-447141">
        <id>Q9UJY5</id>
        <label>GGA1</label>
    </interactant>
    <organismsDiffer>false</organismsDiffer>
    <experiments>3</experiments>
</comment>
<comment type="interaction">
    <interactant intactId="EBI-747505">
        <id>Q8TAB5</id>
    </interactant>
    <interactant intactId="EBI-12108696">
        <id>Q9UJY5-4</id>
        <label>GGA1</label>
    </interactant>
    <organismsDiffer>false</organismsDiffer>
    <experiments>3</experiments>
</comment>
<comment type="interaction">
    <interactant intactId="EBI-747505">
        <id>Q8TAB5</id>
    </interactant>
    <interactant intactId="EBI-1103439">
        <id>P17302</id>
        <label>GJA1</label>
    </interactant>
    <organismsDiffer>false</organismsDiffer>
    <experiments>3</experiments>
</comment>
<comment type="interaction">
    <interactant intactId="EBI-747505">
        <id>Q8TAB5</id>
    </interactant>
    <interactant intactId="EBI-747754">
        <id>P28799</id>
        <label>GRN</label>
    </interactant>
    <organismsDiffer>false</organismsDiffer>
    <experiments>3</experiments>
</comment>
<comment type="interaction">
    <interactant intactId="EBI-747505">
        <id>Q8TAB5</id>
    </interactant>
    <interactant intactId="EBI-712814">
        <id>P54257</id>
        <label>HAP1</label>
    </interactant>
    <organismsDiffer>false</organismsDiffer>
    <experiments>3</experiments>
</comment>
<comment type="interaction">
    <interactant intactId="EBI-747505">
        <id>Q8TAB5</id>
    </interactant>
    <interactant intactId="EBI-2558143">
        <id>Q9BT25</id>
        <label>HAUS8</label>
    </interactant>
    <organismsDiffer>false</organismsDiffer>
    <experiments>3</experiments>
</comment>
<comment type="interaction">
    <interactant intactId="EBI-747505">
        <id>Q8TAB5</id>
    </interactant>
    <interactant intactId="EBI-9091197">
        <id>Q8IY31-3</id>
        <label>IFT20</label>
    </interactant>
    <organismsDiffer>false</organismsDiffer>
    <experiments>3</experiments>
</comment>
<comment type="interaction">
    <interactant intactId="EBI-747505">
        <id>Q8TAB5</id>
    </interactant>
    <interactant intactId="EBI-10975473">
        <id>O60333-2</id>
        <label>KIF1B</label>
    </interactant>
    <organismsDiffer>false</organismsDiffer>
    <experiments>3</experiments>
</comment>
<comment type="interaction">
    <interactant intactId="EBI-747505">
        <id>Q8TAB5</id>
    </interactant>
    <interactant intactId="EBI-10693436">
        <id>Q9BS75</id>
        <label>KLHL20</label>
    </interactant>
    <organismsDiffer>false</organismsDiffer>
    <experiments>3</experiments>
</comment>
<comment type="interaction">
    <interactant intactId="EBI-747505">
        <id>Q8TAB5</id>
    </interactant>
    <interactant intactId="EBI-10171552">
        <id>A1A4E9</id>
        <label>KRT13</label>
    </interactant>
    <organismsDiffer>false</organismsDiffer>
    <experiments>3</experiments>
</comment>
<comment type="interaction">
    <interactant intactId="EBI-747505">
        <id>Q8TAB5</id>
    </interactant>
    <interactant intactId="EBI-739566">
        <id>P19012</id>
        <label>KRT15</label>
    </interactant>
    <organismsDiffer>false</organismsDiffer>
    <experiments>4</experiments>
</comment>
<comment type="interaction">
    <interactant intactId="EBI-747505">
        <id>Q8TAB5</id>
    </interactant>
    <interactant intactId="EBI-356410">
        <id>P08779</id>
        <label>KRT16</label>
    </interactant>
    <organismsDiffer>false</organismsDiffer>
    <experiments>3</experiments>
</comment>
<comment type="interaction">
    <interactant intactId="EBI-747505">
        <id>Q8TAB5</id>
    </interactant>
    <interactant intactId="EBI-2952736">
        <id>Q2M2I5</id>
        <label>KRT24</label>
    </interactant>
    <organismsDiffer>false</organismsDiffer>
    <experiments>5</experiments>
</comment>
<comment type="interaction">
    <interactant intactId="EBI-747505">
        <id>Q8TAB5</id>
    </interactant>
    <interactant intactId="EBI-3044087">
        <id>Q7Z3Y8</id>
        <label>KRT27</label>
    </interactant>
    <organismsDiffer>false</organismsDiffer>
    <experiments>3</experiments>
</comment>
<comment type="interaction">
    <interactant intactId="EBI-747505">
        <id>Q8TAB5</id>
    </interactant>
    <interactant intactId="EBI-948001">
        <id>Q15323</id>
        <label>KRT31</label>
    </interactant>
    <organismsDiffer>false</organismsDiffer>
    <experiments>6</experiments>
</comment>
<comment type="interaction">
    <interactant intactId="EBI-747505">
        <id>Q8TAB5</id>
    </interactant>
    <interactant intactId="EBI-1049638">
        <id>Q14525</id>
        <label>KRT33B</label>
    </interactant>
    <organismsDiffer>false</organismsDiffer>
    <experiments>3</experiments>
</comment>
<comment type="interaction">
    <interactant intactId="EBI-747505">
        <id>Q8TAB5</id>
    </interactant>
    <interactant intactId="EBI-1047093">
        <id>O76011</id>
        <label>KRT34</label>
    </interactant>
    <organismsDiffer>false</organismsDiffer>
    <experiments>3</experiments>
</comment>
<comment type="interaction">
    <interactant intactId="EBI-747505">
        <id>Q8TAB5</id>
    </interactant>
    <interactant intactId="EBI-11958506">
        <id>O76013-2</id>
        <label>KRT36</label>
    </interactant>
    <organismsDiffer>false</organismsDiffer>
    <experiments>3</experiments>
</comment>
<comment type="interaction">
    <interactant intactId="EBI-747505">
        <id>Q8TAB5</id>
    </interactant>
    <interactant intactId="EBI-1047263">
        <id>O76015</id>
        <label>KRT38</label>
    </interactant>
    <organismsDiffer>false</organismsDiffer>
    <experiments>6</experiments>
</comment>
<comment type="interaction">
    <interactant intactId="EBI-747505">
        <id>Q8TAB5</id>
    </interactant>
    <interactant intactId="EBI-11958242">
        <id>Q6A163</id>
        <label>KRT39</label>
    </interactant>
    <organismsDiffer>false</organismsDiffer>
    <experiments>3</experiments>
</comment>
<comment type="interaction">
    <interactant intactId="EBI-747505">
        <id>Q8TAB5</id>
    </interactant>
    <interactant intactId="EBI-10171697">
        <id>Q6A162</id>
        <label>KRT40</label>
    </interactant>
    <organismsDiffer>false</organismsDiffer>
    <experiments>3</experiments>
</comment>
<comment type="interaction">
    <interactant intactId="EBI-747505">
        <id>Q8TAB5</id>
    </interactant>
    <interactant intactId="EBI-2949715">
        <id>O95678</id>
        <label>KRT75</label>
    </interactant>
    <organismsDiffer>false</organismsDiffer>
    <experiments>3</experiments>
</comment>
<comment type="interaction">
    <interactant intactId="EBI-747505">
        <id>Q8TAB5</id>
    </interactant>
    <interactant intactId="EBI-2952745">
        <id>Q01546</id>
        <label>KRT76</label>
    </interactant>
    <organismsDiffer>false</organismsDiffer>
    <experiments>3</experiments>
</comment>
<comment type="interaction">
    <interactant intactId="EBI-747505">
        <id>Q8TAB5</id>
    </interactant>
    <interactant intactId="EBI-2350424">
        <id>Q9BV99</id>
        <label>LRRC61</label>
    </interactant>
    <organismsDiffer>false</organismsDiffer>
    <experiments>3</experiments>
</comment>
<comment type="interaction">
    <interactant intactId="EBI-747505">
        <id>Q8TAB5</id>
    </interactant>
    <interactant intactId="EBI-1045155">
        <id>P43360</id>
        <label>MAGEA6</label>
    </interactant>
    <organismsDiffer>false</organismsDiffer>
    <experiments>3</experiments>
</comment>
<comment type="interaction">
    <interactant intactId="EBI-747505">
        <id>Q8TAB5</id>
    </interactant>
    <interactant intactId="EBI-724076">
        <id>Q99750</id>
        <label>MDFI</label>
    </interactant>
    <organismsDiffer>false</organismsDiffer>
    <experiments>3</experiments>
</comment>
<comment type="interaction">
    <interactant intactId="EBI-747505">
        <id>Q8TAB5</id>
    </interactant>
    <interactant intactId="EBI-394607">
        <id>Q9NPJ6</id>
        <label>MED4</label>
    </interactant>
    <organismsDiffer>false</organismsDiffer>
    <experiments>3</experiments>
</comment>
<comment type="interaction">
    <interactant intactId="EBI-747505">
        <id>Q8TAB5</id>
    </interactant>
    <interactant intactId="EBI-1104552">
        <id>Q9NYP9</id>
        <label>MIS18A</label>
    </interactant>
    <organismsDiffer>false</organismsDiffer>
    <experiments>3</experiments>
</comment>
<comment type="interaction">
    <interactant intactId="EBI-747505">
        <id>Q8TAB5</id>
    </interactant>
    <interactant intactId="EBI-7042162">
        <id>Q9BV36</id>
        <label>MLPH</label>
    </interactant>
    <organismsDiffer>false</organismsDiffer>
    <experiments>3</experiments>
</comment>
<comment type="interaction">
    <interactant intactId="EBI-747505">
        <id>Q8TAB5</id>
    </interactant>
    <interactant intactId="EBI-748896">
        <id>Q96HT8</id>
        <label>MRFAP1L1</label>
    </interactant>
    <organismsDiffer>false</organismsDiffer>
    <experiments>3</experiments>
</comment>
<comment type="interaction">
    <interactant intactId="EBI-747505">
        <id>Q8TAB5</id>
    </interactant>
    <interactant intactId="EBI-742948">
        <id>Q5JR59</id>
        <label>MTUS2</label>
    </interactant>
    <organismsDiffer>false</organismsDiffer>
    <experiments>4</experiments>
</comment>
<comment type="interaction">
    <interactant intactId="EBI-747505">
        <id>Q8TAB5</id>
    </interactant>
    <interactant intactId="EBI-11522433">
        <id>Q5JR59-3</id>
        <label>MTUS2</label>
    </interactant>
    <organismsDiffer>false</organismsDiffer>
    <experiments>3</experiments>
</comment>
<comment type="interaction">
    <interactant intactId="EBI-747505">
        <id>Q8TAB5</id>
    </interactant>
    <interactant intactId="EBI-1759414">
        <id>Q8NFW9</id>
        <label>MYRIP</label>
    </interactant>
    <organismsDiffer>false</organismsDiffer>
    <experiments>6</experiments>
</comment>
<comment type="interaction">
    <interactant intactId="EBI-747505">
        <id>Q8TAB5</id>
    </interactant>
    <interactant intactId="EBI-10172876">
        <id>Q7Z6G3-2</id>
        <label>NECAB2</label>
    </interactant>
    <organismsDiffer>false</organismsDiffer>
    <experiments>3</experiments>
</comment>
<comment type="interaction">
    <interactant intactId="EBI-747505">
        <id>Q8TAB5</id>
    </interactant>
    <interactant intactId="EBI-1055945">
        <id>Q8TDX7</id>
        <label>NEK7</label>
    </interactant>
    <organismsDiffer>false</organismsDiffer>
    <experiments>3</experiments>
</comment>
<comment type="interaction">
    <interactant intactId="EBI-747505">
        <id>Q8TAB5</id>
    </interactant>
    <interactant intactId="EBI-372942">
        <id>Q13287</id>
        <label>NMI</label>
    </interactant>
    <organismsDiffer>false</organismsDiffer>
    <experiments>6</experiments>
</comment>
<comment type="interaction">
    <interactant intactId="EBI-747505">
        <id>Q8TAB5</id>
    </interactant>
    <interactant intactId="EBI-2362014">
        <id>Q96F24</id>
        <label>NRBF2</label>
    </interactant>
    <organismsDiffer>false</organismsDiffer>
    <experiments>3</experiments>
</comment>
<comment type="interaction">
    <interactant intactId="EBI-747505">
        <id>Q8TAB5</id>
    </interactant>
    <interactant intactId="EBI-347978">
        <id>P37198</id>
        <label>NUP62</label>
    </interactant>
    <organismsDiffer>false</organismsDiffer>
    <experiments>6</experiments>
</comment>
<comment type="interaction">
    <interactant intactId="EBI-747505">
        <id>Q8TAB5</id>
    </interactant>
    <interactant intactId="EBI-10173858">
        <id>Q96M63</id>
        <label>ODAD1</label>
    </interactant>
    <organismsDiffer>false</organismsDiffer>
    <experiments>6</experiments>
</comment>
<comment type="interaction">
    <interactant intactId="EBI-747505">
        <id>Q8TAB5</id>
    </interactant>
    <interactant intactId="EBI-716404">
        <id>P16284</id>
        <label>PECAM1</label>
    </interactant>
    <organismsDiffer>false</organismsDiffer>
    <experiments>3</experiments>
</comment>
<comment type="interaction">
    <interactant intactId="EBI-747505">
        <id>Q8TAB5</id>
    </interactant>
    <interactant intactId="EBI-2692890">
        <id>Q96KN3</id>
        <label>PKNOX2</label>
    </interactant>
    <organismsDiffer>false</organismsDiffer>
    <experiments>5</experiments>
</comment>
<comment type="interaction">
    <interactant intactId="EBI-747505">
        <id>Q8TAB5</id>
    </interactant>
    <interactant intactId="EBI-710402">
        <id>Q96I34</id>
        <label>PPP1R16A</label>
    </interactant>
    <organismsDiffer>false</organismsDiffer>
    <experiments>3</experiments>
</comment>
<comment type="interaction">
    <interactant intactId="EBI-747505">
        <id>Q8TAB5</id>
    </interactant>
    <interactant intactId="EBI-357669">
        <id>P62333</id>
        <label>PSMC6</label>
    </interactant>
    <organismsDiffer>false</organismsDiffer>
    <experiments>4</experiments>
</comment>
<comment type="interaction">
    <interactant intactId="EBI-747505">
        <id>Q8TAB5</id>
    </interactant>
    <interactant intactId="EBI-399437">
        <id>P20339</id>
        <label>RAB5A</label>
    </interactant>
    <organismsDiffer>false</organismsDiffer>
    <experiments>3</experiments>
</comment>
<comment type="interaction">
    <interactant intactId="EBI-747505">
        <id>Q8TAB5</id>
    </interactant>
    <interactant intactId="EBI-749285">
        <id>Q15311</id>
        <label>RALBP1</label>
    </interactant>
    <organismsDiffer>false</organismsDiffer>
    <experiments>6</experiments>
</comment>
<comment type="interaction">
    <interactant intactId="EBI-747505">
        <id>Q8TAB5</id>
    </interactant>
    <interactant intactId="EBI-748621">
        <id>Q9UJW9</id>
        <label>SERTAD3</label>
    </interactant>
    <organismsDiffer>false</organismsDiffer>
    <experiments>3</experiments>
</comment>
<comment type="interaction">
    <interactant intactId="EBI-747505">
        <id>Q8TAB5</id>
    </interactant>
    <interactant intactId="EBI-632715">
        <id>Q13573</id>
        <label>SNW1</label>
    </interactant>
    <organismsDiffer>false</organismsDiffer>
    <experiments>3</experiments>
</comment>
<comment type="interaction">
    <interactant intactId="EBI-747505">
        <id>Q8TAB5</id>
    </interactant>
    <interactant intactId="EBI-5235340">
        <id>Q7Z699</id>
        <label>SPRED1</label>
    </interactant>
    <organismsDiffer>false</organismsDiffer>
    <experiments>3</experiments>
</comment>
<comment type="interaction">
    <interactant intactId="EBI-747505">
        <id>Q8TAB5</id>
    </interactant>
    <interactant intactId="EBI-296151">
        <id>P37173</id>
        <label>TGFBR2</label>
    </interactant>
    <organismsDiffer>false</organismsDiffer>
    <experiments>3</experiments>
</comment>
<comment type="interaction">
    <interactant intactId="EBI-747505">
        <id>Q8TAB5</id>
    </interactant>
    <interactant intactId="EBI-741515">
        <id>Q9NVV9</id>
        <label>THAP1</label>
    </interactant>
    <organismsDiffer>false</organismsDiffer>
    <experiments>3</experiments>
</comment>
<comment type="interaction">
    <interactant intactId="EBI-747505">
        <id>Q8TAB5</id>
    </interactant>
    <interactant intactId="EBI-717810">
        <id>Q08117</id>
        <label>TLE5</label>
    </interactant>
    <organismsDiffer>false</organismsDiffer>
    <experiments>3</experiments>
</comment>
<comment type="interaction">
    <interactant intactId="EBI-747505">
        <id>Q8TAB5</id>
    </interactant>
    <interactant intactId="EBI-12821895">
        <id>Q8N6Q1</id>
        <label>TMCO5A</label>
    </interactant>
    <organismsDiffer>false</organismsDiffer>
    <experiments>3</experiments>
</comment>
<comment type="interaction">
    <interactant intactId="EBI-747505">
        <id>Q8TAB5</id>
    </interactant>
    <interactant intactId="EBI-11952721">
        <id>Q05BL1</id>
        <label>TP53BP2</label>
    </interactant>
    <organismsDiffer>false</organismsDiffer>
    <experiments>3</experiments>
</comment>
<comment type="interaction">
    <interactant intactId="EBI-747505">
        <id>Q8TAB5</id>
    </interactant>
    <interactant intactId="EBI-351158">
        <id>P09493</id>
        <label>TPM1</label>
    </interactant>
    <organismsDiffer>false</organismsDiffer>
    <experiments>3</experiments>
</comment>
<comment type="interaction">
    <interactant intactId="EBI-747505">
        <id>Q8TAB5</id>
    </interactant>
    <interactant intactId="EBI-355607">
        <id>P06753</id>
        <label>TPM3</label>
    </interactant>
    <organismsDiffer>false</organismsDiffer>
    <experiments>4</experiments>
</comment>
<comment type="interaction">
    <interactant intactId="EBI-747505">
        <id>Q8TAB5</id>
    </interactant>
    <interactant intactId="EBI-10184033">
        <id>Q5VU62</id>
        <label>TPM3</label>
    </interactant>
    <organismsDiffer>false</organismsDiffer>
    <experiments>3</experiments>
</comment>
<comment type="interaction">
    <interactant intactId="EBI-747505">
        <id>Q8TAB5</id>
    </interactant>
    <interactant intactId="EBI-359224">
        <id>Q13077</id>
        <label>TRAF1</label>
    </interactant>
    <organismsDiffer>false</organismsDiffer>
    <experiments>6</experiments>
</comment>
<comment type="interaction">
    <interactant intactId="EBI-747505">
        <id>Q8TAB5</id>
    </interactant>
    <interactant intactId="EBI-2130429">
        <id>Q9BYV2</id>
        <label>TRIM54</label>
    </interactant>
    <organismsDiffer>false</organismsDiffer>
    <experiments>3</experiments>
</comment>
<comment type="interaction">
    <interactant intactId="EBI-747505">
        <id>Q8TAB5</id>
    </interactant>
    <interactant intactId="EBI-2341648">
        <id>Q6ZMU5</id>
        <label>TRIM72</label>
    </interactant>
    <organismsDiffer>false</organismsDiffer>
    <experiments>3</experiments>
</comment>
<comment type="interaction">
    <interactant intactId="EBI-747505">
        <id>Q8TAB5</id>
    </interactant>
    <interactant intactId="EBI-739895">
        <id>Q8N6Y0</id>
        <label>USHBP1</label>
    </interactant>
    <organismsDiffer>false</organismsDiffer>
    <experiments>7</experiments>
</comment>
<comment type="interaction">
    <interactant intactId="EBI-747505">
        <id>Q8TAB5</id>
    </interactant>
    <interactant intactId="EBI-353844">
        <id>P08670</id>
        <label>VIM</label>
    </interactant>
    <organismsDiffer>false</organismsDiffer>
    <experiments>3</experiments>
</comment>
<comment type="interaction">
    <interactant intactId="EBI-747505">
        <id>Q8TAB5</id>
    </interactant>
    <interactant intactId="EBI-2799833">
        <id>Q8N1B4</id>
        <label>VPS52</label>
    </interactant>
    <organismsDiffer>false</organismsDiffer>
    <experiments>3</experiments>
</comment>
<comment type="interaction">
    <interactant intactId="EBI-747505">
        <id>Q8TAB5</id>
    </interactant>
    <interactant intactId="EBI-720609">
        <id>O76024</id>
        <label>WFS1</label>
    </interactant>
    <organismsDiffer>false</organismsDiffer>
    <experiments>3</experiments>
</comment>
<comment type="interaction">
    <interactant intactId="EBI-747505">
        <id>Q8TAB5</id>
    </interactant>
    <interactant intactId="EBI-4395669">
        <id>Q6ZNG0</id>
        <label>ZNF620</label>
    </interactant>
    <organismsDiffer>false</organismsDiffer>
    <experiments>3</experiments>
</comment>
<comment type="similarity">
    <text evidence="2">Belongs to the UPF0500 family.</text>
</comment>
<comment type="sequence caution" evidence="2">
    <conflict type="erroneous initiation">
        <sequence resource="EMBL-CDS" id="BAC04799"/>
    </conflict>
</comment>
<organism>
    <name type="scientific">Homo sapiens</name>
    <name type="common">Human</name>
    <dbReference type="NCBI Taxonomy" id="9606"/>
    <lineage>
        <taxon>Eukaryota</taxon>
        <taxon>Metazoa</taxon>
        <taxon>Chordata</taxon>
        <taxon>Craniata</taxon>
        <taxon>Vertebrata</taxon>
        <taxon>Euteleostomi</taxon>
        <taxon>Mammalia</taxon>
        <taxon>Eutheria</taxon>
        <taxon>Euarchontoglires</taxon>
        <taxon>Primates</taxon>
        <taxon>Haplorrhini</taxon>
        <taxon>Catarrhini</taxon>
        <taxon>Hominidae</taxon>
        <taxon>Homo</taxon>
    </lineage>
</organism>